<comment type="sequence caution" evidence="3">
    <conflict type="erroneous gene model prediction">
        <sequence resource="EMBL-CDS" id="BAF16076"/>
    </conflict>
</comment>
<comment type="sequence caution" evidence="3">
    <conflict type="erroneous gene model prediction">
        <sequence resource="EMBL-CDS" id="CAE04843"/>
    </conflict>
</comment>
<gene>
    <name type="ordered locus">Os04g0663200</name>
    <name type="ordered locus">LOC_Os04g56750</name>
    <name type="ORF">OsJ_015790</name>
    <name type="ORF">OSJNBa0084K01.15</name>
</gene>
<protein>
    <recommendedName>
        <fullName>Zinc finger CCCH domain-containing protein 30</fullName>
        <shortName>OsC3H30</shortName>
    </recommendedName>
</protein>
<proteinExistence type="evidence at transcript level"/>
<accession>Q7XM16</accession>
<accession>Q0J9B1</accession>
<keyword id="KW-0238">DNA-binding</keyword>
<keyword id="KW-0479">Metal-binding</keyword>
<keyword id="KW-1185">Reference proteome</keyword>
<keyword id="KW-0862">Zinc</keyword>
<keyword id="KW-0863">Zinc-finger</keyword>
<name>C3H30_ORYSJ</name>
<dbReference type="EMBL" id="AL606999">
    <property type="protein sequence ID" value="CAE04843.2"/>
    <property type="status" value="ALT_SEQ"/>
    <property type="molecule type" value="Genomic_DNA"/>
</dbReference>
<dbReference type="EMBL" id="AP008210">
    <property type="protein sequence ID" value="BAF16076.1"/>
    <property type="status" value="ALT_SEQ"/>
    <property type="molecule type" value="Genomic_DNA"/>
</dbReference>
<dbReference type="EMBL" id="AP014960">
    <property type="status" value="NOT_ANNOTATED_CDS"/>
    <property type="molecule type" value="Genomic_DNA"/>
</dbReference>
<dbReference type="EMBL" id="CM000141">
    <property type="status" value="NOT_ANNOTATED_CDS"/>
    <property type="molecule type" value="Genomic_DNA"/>
</dbReference>
<dbReference type="EMBL" id="AK105958">
    <property type="status" value="NOT_ANNOTATED_CDS"/>
    <property type="molecule type" value="mRNA"/>
</dbReference>
<dbReference type="RefSeq" id="XP_015636279.1">
    <property type="nucleotide sequence ID" value="XM_015780793.1"/>
</dbReference>
<dbReference type="FunCoup" id="Q7XM16">
    <property type="interactions" value="2323"/>
</dbReference>
<dbReference type="STRING" id="39947.Q7XM16"/>
<dbReference type="PaxDb" id="39947-Q7XM16"/>
<dbReference type="KEGG" id="dosa:Os04g0663200"/>
<dbReference type="eggNOG" id="ENOG502QQT9">
    <property type="taxonomic scope" value="Eukaryota"/>
</dbReference>
<dbReference type="HOGENOM" id="CLU_023896_0_0_1"/>
<dbReference type="InParanoid" id="Q7XM16"/>
<dbReference type="OrthoDB" id="1928519at2759"/>
<dbReference type="Proteomes" id="UP000000763">
    <property type="component" value="Chromosome 4"/>
</dbReference>
<dbReference type="Proteomes" id="UP000007752">
    <property type="component" value="Chromosome 4"/>
</dbReference>
<dbReference type="Proteomes" id="UP000059680">
    <property type="component" value="Chromosome 4"/>
</dbReference>
<dbReference type="GO" id="GO:0003677">
    <property type="term" value="F:DNA binding"/>
    <property type="evidence" value="ECO:0007669"/>
    <property type="project" value="UniProtKB-KW"/>
</dbReference>
<dbReference type="GO" id="GO:0008270">
    <property type="term" value="F:zinc ion binding"/>
    <property type="evidence" value="ECO:0007669"/>
    <property type="project" value="UniProtKB-KW"/>
</dbReference>
<dbReference type="InterPro" id="IPR000571">
    <property type="entry name" value="Znf_CCCH"/>
</dbReference>
<dbReference type="InterPro" id="IPR036855">
    <property type="entry name" value="Znf_CCCH_sf"/>
</dbReference>
<dbReference type="PANTHER" id="PTHR33400:SF2">
    <property type="entry name" value="ZINC FINGER CCCH DOMAIN-CONTAINING PROTEIN 6"/>
    <property type="match status" value="1"/>
</dbReference>
<dbReference type="PANTHER" id="PTHR33400">
    <property type="entry name" value="ZINC FINGER CCCH DOMAIN-CONTAINING PROTEIN 6-RELATED"/>
    <property type="match status" value="1"/>
</dbReference>
<dbReference type="SUPFAM" id="SSF90229">
    <property type="entry name" value="CCCH zinc finger"/>
    <property type="match status" value="1"/>
</dbReference>
<dbReference type="PROSITE" id="PS50103">
    <property type="entry name" value="ZF_C3H1"/>
    <property type="match status" value="1"/>
</dbReference>
<feature type="chain" id="PRO_0000346825" description="Zinc finger CCCH domain-containing protein 30">
    <location>
        <begin position="1"/>
        <end position="469"/>
    </location>
</feature>
<feature type="zinc finger region" description="C3H1-type" evidence="1">
    <location>
        <begin position="415"/>
        <end position="443"/>
    </location>
</feature>
<feature type="region of interest" description="Disordered" evidence="2">
    <location>
        <begin position="444"/>
        <end position="469"/>
    </location>
</feature>
<feature type="compositionally biased region" description="Basic residues" evidence="2">
    <location>
        <begin position="449"/>
        <end position="458"/>
    </location>
</feature>
<feature type="sequence conflict" description="In Ref. 6; AK105958." evidence="3" ref="6">
    <original>R</original>
    <variation>S</variation>
    <location>
        <position position="357"/>
    </location>
</feature>
<evidence type="ECO:0000255" key="1">
    <source>
        <dbReference type="PROSITE-ProRule" id="PRU00723"/>
    </source>
</evidence>
<evidence type="ECO:0000256" key="2">
    <source>
        <dbReference type="SAM" id="MobiDB-lite"/>
    </source>
</evidence>
<evidence type="ECO:0000305" key="3"/>
<organism>
    <name type="scientific">Oryza sativa subsp. japonica</name>
    <name type="common">Rice</name>
    <dbReference type="NCBI Taxonomy" id="39947"/>
    <lineage>
        <taxon>Eukaryota</taxon>
        <taxon>Viridiplantae</taxon>
        <taxon>Streptophyta</taxon>
        <taxon>Embryophyta</taxon>
        <taxon>Tracheophyta</taxon>
        <taxon>Spermatophyta</taxon>
        <taxon>Magnoliopsida</taxon>
        <taxon>Liliopsida</taxon>
        <taxon>Poales</taxon>
        <taxon>Poaceae</taxon>
        <taxon>BOP clade</taxon>
        <taxon>Oryzoideae</taxon>
        <taxon>Oryzeae</taxon>
        <taxon>Oryzinae</taxon>
        <taxon>Oryza</taxon>
        <taxon>Oryza sativa</taxon>
    </lineage>
</organism>
<sequence length="469" mass="50473">MMGSRRSRRVSWASGGNLCKVRLFLSEDSPSQAGLRPQDNLQAKGSWLLHAAGPSSDDSLPPGFESLPPSNDLKIDMSQIPLIRWKCPPHIVLEQDWHIVAGEESREIEIQNERINGALEAIYPRPSNIPPNPFLSLDVKDAHYDDSKTLLVPLIPLEDDDASDQLEGPTLDLPSHYNITGVSNTPVSAEQQPPCGGAISSGFTIEPQAAVSATVTAIMQTIQSNQNGSMADQNGSTIDQELLFKILSDPSQLQRLMKECGPVRHEQSASSSVVAPLVSIPPPQITASSPAPFSDHVGTFHGMNPTLPPPPPMMNRPPSTIPSVAMNHPPSSSPAMNFGSALPSSSPSVNFGSVPGRGVGYYKTLIHQHGGERLEQPFEQHGMQFGMYRQPGPPQNGGIDAMNGAAAMVSRDGKVRPMKPCAYFNSPKGCRNGASCTFLHDASAPTRKDHQKQKGSKRIKLDNTMGGRN</sequence>
<reference key="1">
    <citation type="journal article" date="2002" name="Nature">
        <title>Sequence and analysis of rice chromosome 4.</title>
        <authorList>
            <person name="Feng Q."/>
            <person name="Zhang Y."/>
            <person name="Hao P."/>
            <person name="Wang S."/>
            <person name="Fu G."/>
            <person name="Huang Y."/>
            <person name="Li Y."/>
            <person name="Zhu J."/>
            <person name="Liu Y."/>
            <person name="Hu X."/>
            <person name="Jia P."/>
            <person name="Zhang Y."/>
            <person name="Zhao Q."/>
            <person name="Ying K."/>
            <person name="Yu S."/>
            <person name="Tang Y."/>
            <person name="Weng Q."/>
            <person name="Zhang L."/>
            <person name="Lu Y."/>
            <person name="Mu J."/>
            <person name="Lu Y."/>
            <person name="Zhang L.S."/>
            <person name="Yu Z."/>
            <person name="Fan D."/>
            <person name="Liu X."/>
            <person name="Lu T."/>
            <person name="Li C."/>
            <person name="Wu Y."/>
            <person name="Sun T."/>
            <person name="Lei H."/>
            <person name="Li T."/>
            <person name="Hu H."/>
            <person name="Guan J."/>
            <person name="Wu M."/>
            <person name="Zhang R."/>
            <person name="Zhou B."/>
            <person name="Chen Z."/>
            <person name="Chen L."/>
            <person name="Jin Z."/>
            <person name="Wang R."/>
            <person name="Yin H."/>
            <person name="Cai Z."/>
            <person name="Ren S."/>
            <person name="Lv G."/>
            <person name="Gu W."/>
            <person name="Zhu G."/>
            <person name="Tu Y."/>
            <person name="Jia J."/>
            <person name="Zhang Y."/>
            <person name="Chen J."/>
            <person name="Kang H."/>
            <person name="Chen X."/>
            <person name="Shao C."/>
            <person name="Sun Y."/>
            <person name="Hu Q."/>
            <person name="Zhang X."/>
            <person name="Zhang W."/>
            <person name="Wang L."/>
            <person name="Ding C."/>
            <person name="Sheng H."/>
            <person name="Gu J."/>
            <person name="Chen S."/>
            <person name="Ni L."/>
            <person name="Zhu F."/>
            <person name="Chen W."/>
            <person name="Lan L."/>
            <person name="Lai Y."/>
            <person name="Cheng Z."/>
            <person name="Gu M."/>
            <person name="Jiang J."/>
            <person name="Li J."/>
            <person name="Hong G."/>
            <person name="Xue Y."/>
            <person name="Han B."/>
        </authorList>
    </citation>
    <scope>NUCLEOTIDE SEQUENCE [LARGE SCALE GENOMIC DNA]</scope>
    <source>
        <strain>cv. Nipponbare</strain>
    </source>
</reference>
<reference key="2">
    <citation type="journal article" date="2005" name="Nature">
        <title>The map-based sequence of the rice genome.</title>
        <authorList>
            <consortium name="International rice genome sequencing project (IRGSP)"/>
        </authorList>
    </citation>
    <scope>NUCLEOTIDE SEQUENCE [LARGE SCALE GENOMIC DNA]</scope>
    <source>
        <strain>cv. Nipponbare</strain>
    </source>
</reference>
<reference key="3">
    <citation type="journal article" date="2008" name="Nucleic Acids Res.">
        <title>The rice annotation project database (RAP-DB): 2008 update.</title>
        <authorList>
            <consortium name="The rice annotation project (RAP)"/>
        </authorList>
    </citation>
    <scope>GENOME REANNOTATION</scope>
    <source>
        <strain>cv. Nipponbare</strain>
    </source>
</reference>
<reference key="4">
    <citation type="journal article" date="2013" name="Rice">
        <title>Improvement of the Oryza sativa Nipponbare reference genome using next generation sequence and optical map data.</title>
        <authorList>
            <person name="Kawahara Y."/>
            <person name="de la Bastide M."/>
            <person name="Hamilton J.P."/>
            <person name="Kanamori H."/>
            <person name="McCombie W.R."/>
            <person name="Ouyang S."/>
            <person name="Schwartz D.C."/>
            <person name="Tanaka T."/>
            <person name="Wu J."/>
            <person name="Zhou S."/>
            <person name="Childs K.L."/>
            <person name="Davidson R.M."/>
            <person name="Lin H."/>
            <person name="Quesada-Ocampo L."/>
            <person name="Vaillancourt B."/>
            <person name="Sakai H."/>
            <person name="Lee S.S."/>
            <person name="Kim J."/>
            <person name="Numa H."/>
            <person name="Itoh T."/>
            <person name="Buell C.R."/>
            <person name="Matsumoto T."/>
        </authorList>
    </citation>
    <scope>GENOME REANNOTATION</scope>
    <source>
        <strain>cv. Nipponbare</strain>
    </source>
</reference>
<reference key="5">
    <citation type="journal article" date="2005" name="PLoS Biol.">
        <title>The genomes of Oryza sativa: a history of duplications.</title>
        <authorList>
            <person name="Yu J."/>
            <person name="Wang J."/>
            <person name="Lin W."/>
            <person name="Li S."/>
            <person name="Li H."/>
            <person name="Zhou J."/>
            <person name="Ni P."/>
            <person name="Dong W."/>
            <person name="Hu S."/>
            <person name="Zeng C."/>
            <person name="Zhang J."/>
            <person name="Zhang Y."/>
            <person name="Li R."/>
            <person name="Xu Z."/>
            <person name="Li S."/>
            <person name="Li X."/>
            <person name="Zheng H."/>
            <person name="Cong L."/>
            <person name="Lin L."/>
            <person name="Yin J."/>
            <person name="Geng J."/>
            <person name="Li G."/>
            <person name="Shi J."/>
            <person name="Liu J."/>
            <person name="Lv H."/>
            <person name="Li J."/>
            <person name="Wang J."/>
            <person name="Deng Y."/>
            <person name="Ran L."/>
            <person name="Shi X."/>
            <person name="Wang X."/>
            <person name="Wu Q."/>
            <person name="Li C."/>
            <person name="Ren X."/>
            <person name="Wang J."/>
            <person name="Wang X."/>
            <person name="Li D."/>
            <person name="Liu D."/>
            <person name="Zhang X."/>
            <person name="Ji Z."/>
            <person name="Zhao W."/>
            <person name="Sun Y."/>
            <person name="Zhang Z."/>
            <person name="Bao J."/>
            <person name="Han Y."/>
            <person name="Dong L."/>
            <person name="Ji J."/>
            <person name="Chen P."/>
            <person name="Wu S."/>
            <person name="Liu J."/>
            <person name="Xiao Y."/>
            <person name="Bu D."/>
            <person name="Tan J."/>
            <person name="Yang L."/>
            <person name="Ye C."/>
            <person name="Zhang J."/>
            <person name="Xu J."/>
            <person name="Zhou Y."/>
            <person name="Yu Y."/>
            <person name="Zhang B."/>
            <person name="Zhuang S."/>
            <person name="Wei H."/>
            <person name="Liu B."/>
            <person name="Lei M."/>
            <person name="Yu H."/>
            <person name="Li Y."/>
            <person name="Xu H."/>
            <person name="Wei S."/>
            <person name="He X."/>
            <person name="Fang L."/>
            <person name="Zhang Z."/>
            <person name="Zhang Y."/>
            <person name="Huang X."/>
            <person name="Su Z."/>
            <person name="Tong W."/>
            <person name="Li J."/>
            <person name="Tong Z."/>
            <person name="Li S."/>
            <person name="Ye J."/>
            <person name="Wang L."/>
            <person name="Fang L."/>
            <person name="Lei T."/>
            <person name="Chen C.-S."/>
            <person name="Chen H.-C."/>
            <person name="Xu Z."/>
            <person name="Li H."/>
            <person name="Huang H."/>
            <person name="Zhang F."/>
            <person name="Xu H."/>
            <person name="Li N."/>
            <person name="Zhao C."/>
            <person name="Li S."/>
            <person name="Dong L."/>
            <person name="Huang Y."/>
            <person name="Li L."/>
            <person name="Xi Y."/>
            <person name="Qi Q."/>
            <person name="Li W."/>
            <person name="Zhang B."/>
            <person name="Hu W."/>
            <person name="Zhang Y."/>
            <person name="Tian X."/>
            <person name="Jiao Y."/>
            <person name="Liang X."/>
            <person name="Jin J."/>
            <person name="Gao L."/>
            <person name="Zheng W."/>
            <person name="Hao B."/>
            <person name="Liu S.-M."/>
            <person name="Wang W."/>
            <person name="Yuan L."/>
            <person name="Cao M."/>
            <person name="McDermott J."/>
            <person name="Samudrala R."/>
            <person name="Wang J."/>
            <person name="Wong G.K.-S."/>
            <person name="Yang H."/>
        </authorList>
    </citation>
    <scope>NUCLEOTIDE SEQUENCE [LARGE SCALE GENOMIC DNA]</scope>
    <source>
        <strain>cv. Nipponbare</strain>
    </source>
</reference>
<reference key="6">
    <citation type="journal article" date="2003" name="Science">
        <title>Collection, mapping, and annotation of over 28,000 cDNA clones from japonica rice.</title>
        <authorList>
            <consortium name="The rice full-length cDNA consortium"/>
        </authorList>
    </citation>
    <scope>NUCLEOTIDE SEQUENCE [LARGE SCALE MRNA] OF 77-469</scope>
    <source>
        <strain>cv. Nipponbare</strain>
    </source>
</reference>
<reference key="7">
    <citation type="journal article" date="2008" name="BMC Genomics">
        <title>Genome-wide analysis of CCCH zinc finger family in Arabidopsis and rice.</title>
        <authorList>
            <person name="Wang D."/>
            <person name="Guo Y."/>
            <person name="Wu C."/>
            <person name="Yang G."/>
            <person name="Li Y."/>
            <person name="Zheng C."/>
        </authorList>
    </citation>
    <scope>NOMENCLATURE</scope>
</reference>